<reference key="1">
    <citation type="submission" date="2005-08" db="EMBL/GenBank/DDBJ databases">
        <title>Complete sequence of chromosome 1 of Synechococcus elongatus PCC 7942.</title>
        <authorList>
            <consortium name="US DOE Joint Genome Institute"/>
            <person name="Copeland A."/>
            <person name="Lucas S."/>
            <person name="Lapidus A."/>
            <person name="Barry K."/>
            <person name="Detter J.C."/>
            <person name="Glavina T."/>
            <person name="Hammon N."/>
            <person name="Israni S."/>
            <person name="Pitluck S."/>
            <person name="Schmutz J."/>
            <person name="Larimer F."/>
            <person name="Land M."/>
            <person name="Kyrpides N."/>
            <person name="Lykidis A."/>
            <person name="Golden S."/>
            <person name="Richardson P."/>
        </authorList>
    </citation>
    <scope>NUCLEOTIDE SEQUENCE [LARGE SCALE GENOMIC DNA]</scope>
    <source>
        <strain>ATCC 33912 / PCC 7942 / FACHB-805</strain>
    </source>
</reference>
<evidence type="ECO:0000255" key="1">
    <source>
        <dbReference type="HAMAP-Rule" id="MF_01077"/>
    </source>
</evidence>
<feature type="chain" id="PRO_1000064789" description="Ribosome maturation factor RimP">
    <location>
        <begin position="1"/>
        <end position="153"/>
    </location>
</feature>
<name>RIMP_SYNE7</name>
<accession>Q31LL6</accession>
<sequence length="153" mass="17029">MAHPLIPAILDLARPIADDLDLEVVQAVFHTNQSPPILRLDIRSRVGDTGLEDCERMSRSFELALDEANIIPDAYVLEISSPGLSDTLESDRDFLSFKGFPVQVTSRSPNDDTVEQQGTLLGRDADSVYLNKRGRTVRIARSQVLEVKLIEQL</sequence>
<organism>
    <name type="scientific">Synechococcus elongatus (strain ATCC 33912 / PCC 7942 / FACHB-805)</name>
    <name type="common">Anacystis nidulans R2</name>
    <dbReference type="NCBI Taxonomy" id="1140"/>
    <lineage>
        <taxon>Bacteria</taxon>
        <taxon>Bacillati</taxon>
        <taxon>Cyanobacteriota</taxon>
        <taxon>Cyanophyceae</taxon>
        <taxon>Synechococcales</taxon>
        <taxon>Synechococcaceae</taxon>
        <taxon>Synechococcus</taxon>
    </lineage>
</organism>
<gene>
    <name evidence="1" type="primary">rimP</name>
    <name type="ordered locus">Synpcc7942_2023</name>
</gene>
<keyword id="KW-0963">Cytoplasm</keyword>
<keyword id="KW-1185">Reference proteome</keyword>
<keyword id="KW-0690">Ribosome biogenesis</keyword>
<protein>
    <recommendedName>
        <fullName evidence="1">Ribosome maturation factor RimP</fullName>
    </recommendedName>
</protein>
<comment type="function">
    <text evidence="1">Required for maturation of 30S ribosomal subunits.</text>
</comment>
<comment type="subcellular location">
    <subcellularLocation>
        <location evidence="1">Cytoplasm</location>
    </subcellularLocation>
</comment>
<comment type="similarity">
    <text evidence="1">Belongs to the RimP family.</text>
</comment>
<proteinExistence type="inferred from homology"/>
<dbReference type="EMBL" id="CP000100">
    <property type="protein sequence ID" value="ABB58053.1"/>
    <property type="molecule type" value="Genomic_DNA"/>
</dbReference>
<dbReference type="RefSeq" id="WP_011244382.1">
    <property type="nucleotide sequence ID" value="NZ_JACJTX010000001.1"/>
</dbReference>
<dbReference type="SMR" id="Q31LL6"/>
<dbReference type="STRING" id="1140.Synpcc7942_2023"/>
<dbReference type="PaxDb" id="1140-Synpcc7942_2023"/>
<dbReference type="GeneID" id="72430898"/>
<dbReference type="KEGG" id="syf:Synpcc7942_2023"/>
<dbReference type="eggNOG" id="COG0779">
    <property type="taxonomic scope" value="Bacteria"/>
</dbReference>
<dbReference type="HOGENOM" id="CLU_070525_2_1_3"/>
<dbReference type="OrthoDB" id="9805006at2"/>
<dbReference type="BioCyc" id="SYNEL:SYNPCC7942_2023-MONOMER"/>
<dbReference type="Proteomes" id="UP000889800">
    <property type="component" value="Chromosome"/>
</dbReference>
<dbReference type="GO" id="GO:0005829">
    <property type="term" value="C:cytosol"/>
    <property type="evidence" value="ECO:0007669"/>
    <property type="project" value="TreeGrafter"/>
</dbReference>
<dbReference type="GO" id="GO:0000028">
    <property type="term" value="P:ribosomal small subunit assembly"/>
    <property type="evidence" value="ECO:0007669"/>
    <property type="project" value="TreeGrafter"/>
</dbReference>
<dbReference type="GO" id="GO:0006412">
    <property type="term" value="P:translation"/>
    <property type="evidence" value="ECO:0007669"/>
    <property type="project" value="TreeGrafter"/>
</dbReference>
<dbReference type="Gene3D" id="3.30.300.70">
    <property type="entry name" value="RimP-like superfamily, N-terminal"/>
    <property type="match status" value="1"/>
</dbReference>
<dbReference type="HAMAP" id="MF_01077">
    <property type="entry name" value="RimP"/>
    <property type="match status" value="1"/>
</dbReference>
<dbReference type="InterPro" id="IPR003728">
    <property type="entry name" value="Ribosome_maturation_RimP"/>
</dbReference>
<dbReference type="InterPro" id="IPR036847">
    <property type="entry name" value="RimP_C_sf"/>
</dbReference>
<dbReference type="InterPro" id="IPR028989">
    <property type="entry name" value="RimP_N"/>
</dbReference>
<dbReference type="InterPro" id="IPR035956">
    <property type="entry name" value="RimP_N_sf"/>
</dbReference>
<dbReference type="NCBIfam" id="NF000935">
    <property type="entry name" value="PRK00092.3-3"/>
    <property type="match status" value="1"/>
</dbReference>
<dbReference type="PANTHER" id="PTHR33867">
    <property type="entry name" value="RIBOSOME MATURATION FACTOR RIMP"/>
    <property type="match status" value="1"/>
</dbReference>
<dbReference type="PANTHER" id="PTHR33867:SF1">
    <property type="entry name" value="RIBOSOME MATURATION FACTOR RIMP"/>
    <property type="match status" value="1"/>
</dbReference>
<dbReference type="Pfam" id="PF02576">
    <property type="entry name" value="RimP_N"/>
    <property type="match status" value="1"/>
</dbReference>
<dbReference type="SUPFAM" id="SSF74942">
    <property type="entry name" value="YhbC-like, C-terminal domain"/>
    <property type="match status" value="1"/>
</dbReference>
<dbReference type="SUPFAM" id="SSF75420">
    <property type="entry name" value="YhbC-like, N-terminal domain"/>
    <property type="match status" value="1"/>
</dbReference>